<organism>
    <name type="scientific">Prochlorococcus marinus subsp. pastoris (strain CCMP1986 / NIES-2087 / MED4)</name>
    <dbReference type="NCBI Taxonomy" id="59919"/>
    <lineage>
        <taxon>Bacteria</taxon>
        <taxon>Bacillati</taxon>
        <taxon>Cyanobacteriota</taxon>
        <taxon>Cyanophyceae</taxon>
        <taxon>Synechococcales</taxon>
        <taxon>Prochlorococcaceae</taxon>
        <taxon>Prochlorococcus</taxon>
    </lineage>
</organism>
<gene>
    <name type="primary">yidC</name>
    <name type="ordered locus">PMM1186</name>
</gene>
<sequence>MIGFISEKLLIPILDFFYGLVPSYGLAIVALTVVIRIALFPLSAGSIRSARRMKIAQPVMQKRQAEIKSKFSSDPKKQQEELGKLMNEFGSPLAGCLPLIVQMPVLFALFATLRGSPFADVPYNINLKVLPQDQIAAIDPKPYKSPRHSIFVTEKSHFPVIATLPNGTKLGSEESVKINLQTTNGNNYSEVLSNYDNGSRFLPTWTVSKGSENIKVSQDGLVTAIKPGDATIEAKIPGLAAKSGFLFIKALGQVGFYVDGSINWDIATLVGAFGLTLLLSQVLSSQGMPSNAQQSTANKITPVMITGMFLFFPLPAGVLLYMVVANIFQAFQTFLLNKEALPANLQKILDDQLTGKNKVIPSTANISDKRLPFEPNNKK</sequence>
<reference key="1">
    <citation type="journal article" date="2003" name="Nature">
        <title>Genome divergence in two Prochlorococcus ecotypes reflects oceanic niche differentiation.</title>
        <authorList>
            <person name="Rocap G."/>
            <person name="Larimer F.W."/>
            <person name="Lamerdin J.E."/>
            <person name="Malfatti S."/>
            <person name="Chain P."/>
            <person name="Ahlgren N.A."/>
            <person name="Arellano A."/>
            <person name="Coleman M."/>
            <person name="Hauser L."/>
            <person name="Hess W.R."/>
            <person name="Johnson Z.I."/>
            <person name="Land M.L."/>
            <person name="Lindell D."/>
            <person name="Post A.F."/>
            <person name="Regala W."/>
            <person name="Shah M."/>
            <person name="Shaw S.L."/>
            <person name="Steglich C."/>
            <person name="Sullivan M.B."/>
            <person name="Ting C.S."/>
            <person name="Tolonen A."/>
            <person name="Webb E.A."/>
            <person name="Zinser E.R."/>
            <person name="Chisholm S.W."/>
        </authorList>
    </citation>
    <scope>NUCLEOTIDE SEQUENCE [LARGE SCALE GENOMIC DNA]</scope>
    <source>
        <strain>CCMP1986 / NIES-2087 / MED4</strain>
    </source>
</reference>
<comment type="function">
    <text evidence="1">Required for the insertion and/or proper folding and/or complex formation of integral membrane proteins into the membrane. Involved in integration of membrane proteins that insert both dependently and independently of the Sec translocase complex, as well as at least some lipoproteins. Aids folding of multispanning membrane proteins (By similarity).</text>
</comment>
<comment type="function">
    <text evidence="1">Probably also aids protein insertion, folding and/or assembly of membrane complexes destined for the thylakoid.</text>
</comment>
<comment type="subunit">
    <text evidence="1">Interacts with the Sec translocase complex via SecD. Specifically interacts with transmembrane segments of nascent integral membrane proteins during membrane integration (By similarity).</text>
</comment>
<comment type="subcellular location">
    <subcellularLocation>
        <location evidence="1">Cell inner membrane</location>
        <topology evidence="1">Multi-pass membrane protein</topology>
    </subcellularLocation>
</comment>
<comment type="similarity">
    <text evidence="3">Belongs to the OXA1/ALB3/YidC family. Type 1 subfamily.</text>
</comment>
<proteinExistence type="inferred from homology"/>
<evidence type="ECO:0000250" key="1"/>
<evidence type="ECO:0000255" key="2"/>
<evidence type="ECO:0000305" key="3"/>
<dbReference type="EMBL" id="BX548174">
    <property type="protein sequence ID" value="CAE19645.1"/>
    <property type="molecule type" value="Genomic_DNA"/>
</dbReference>
<dbReference type="RefSeq" id="WP_011132820.1">
    <property type="nucleotide sequence ID" value="NC_005072.1"/>
</dbReference>
<dbReference type="STRING" id="59919.PMM1186"/>
<dbReference type="KEGG" id="pmm:PMM1186"/>
<dbReference type="eggNOG" id="COG0706">
    <property type="taxonomic scope" value="Bacteria"/>
</dbReference>
<dbReference type="HOGENOM" id="CLU_038573_0_0_3"/>
<dbReference type="OrthoDB" id="9780552at2"/>
<dbReference type="Proteomes" id="UP000001026">
    <property type="component" value="Chromosome"/>
</dbReference>
<dbReference type="GO" id="GO:0005886">
    <property type="term" value="C:plasma membrane"/>
    <property type="evidence" value="ECO:0007669"/>
    <property type="project" value="UniProtKB-SubCell"/>
</dbReference>
<dbReference type="GO" id="GO:0032977">
    <property type="term" value="F:membrane insertase activity"/>
    <property type="evidence" value="ECO:0007669"/>
    <property type="project" value="InterPro"/>
</dbReference>
<dbReference type="GO" id="GO:0051205">
    <property type="term" value="P:protein insertion into membrane"/>
    <property type="evidence" value="ECO:0007669"/>
    <property type="project" value="TreeGrafter"/>
</dbReference>
<dbReference type="GO" id="GO:0015031">
    <property type="term" value="P:protein transport"/>
    <property type="evidence" value="ECO:0007669"/>
    <property type="project" value="UniProtKB-KW"/>
</dbReference>
<dbReference type="CDD" id="cd20070">
    <property type="entry name" value="5TM_YidC_Alb3"/>
    <property type="match status" value="1"/>
</dbReference>
<dbReference type="InterPro" id="IPR001708">
    <property type="entry name" value="YidC/ALB3/OXA1/COX18"/>
</dbReference>
<dbReference type="InterPro" id="IPR028055">
    <property type="entry name" value="YidC/Oxa/ALB_C"/>
</dbReference>
<dbReference type="InterPro" id="IPR047196">
    <property type="entry name" value="YidC_ALB_C"/>
</dbReference>
<dbReference type="NCBIfam" id="NF002734">
    <property type="entry name" value="PRK02654.1"/>
    <property type="match status" value="1"/>
</dbReference>
<dbReference type="NCBIfam" id="TIGR03592">
    <property type="entry name" value="yidC_oxa1_cterm"/>
    <property type="match status" value="1"/>
</dbReference>
<dbReference type="PANTHER" id="PTHR12428:SF65">
    <property type="entry name" value="CYTOCHROME C OXIDASE ASSEMBLY PROTEIN COX18, MITOCHONDRIAL"/>
    <property type="match status" value="1"/>
</dbReference>
<dbReference type="PANTHER" id="PTHR12428">
    <property type="entry name" value="OXA1"/>
    <property type="match status" value="1"/>
</dbReference>
<dbReference type="Pfam" id="PF02096">
    <property type="entry name" value="60KD_IMP"/>
    <property type="match status" value="1"/>
</dbReference>
<accession>Q7V0R8</accession>
<feature type="chain" id="PRO_0000124740" description="Membrane protein insertase YidC">
    <location>
        <begin position="1"/>
        <end position="379"/>
    </location>
</feature>
<feature type="transmembrane region" description="Helical" evidence="2">
    <location>
        <begin position="20"/>
        <end position="42"/>
    </location>
</feature>
<feature type="transmembrane region" description="Helical" evidence="2">
    <location>
        <begin position="93"/>
        <end position="113"/>
    </location>
</feature>
<feature type="transmembrane region" description="Helical" evidence="2">
    <location>
        <begin position="264"/>
        <end position="284"/>
    </location>
</feature>
<feature type="transmembrane region" description="Helical" evidence="2">
    <location>
        <begin position="303"/>
        <end position="323"/>
    </location>
</feature>
<keyword id="KW-0997">Cell inner membrane</keyword>
<keyword id="KW-1003">Cell membrane</keyword>
<keyword id="KW-0143">Chaperone</keyword>
<keyword id="KW-0472">Membrane</keyword>
<keyword id="KW-0653">Protein transport</keyword>
<keyword id="KW-0812">Transmembrane</keyword>
<keyword id="KW-1133">Transmembrane helix</keyword>
<keyword id="KW-0813">Transport</keyword>
<name>YIDC_PROMP</name>
<protein>
    <recommendedName>
        <fullName>Membrane protein insertase YidC</fullName>
    </recommendedName>
    <alternativeName>
        <fullName>Foldase YidC</fullName>
    </alternativeName>
    <alternativeName>
        <fullName>Membrane integrase YidC</fullName>
    </alternativeName>
    <alternativeName>
        <fullName>Membrane protein YidC</fullName>
    </alternativeName>
</protein>